<protein>
    <recommendedName>
        <fullName>Homeobox protein Hox-B3</fullName>
    </recommendedName>
    <alternativeName>
        <fullName>Homeobox protein Hox-2.7</fullName>
        <shortName>Chox-2.7</shortName>
    </alternativeName>
</protein>
<accession>P23682</accession>
<comment type="function">
    <text>Sequence-specific transcription factor which is part of a developmental regulatory system that provides cells with specific positional identities on the anterior-posterior axis.</text>
</comment>
<comment type="subcellular location">
    <subcellularLocation>
        <location>Nucleus</location>
    </subcellularLocation>
</comment>
<comment type="similarity">
    <text evidence="3">Belongs to the Antp homeobox family.</text>
</comment>
<evidence type="ECO:0000255" key="1">
    <source>
        <dbReference type="PROSITE-ProRule" id="PRU00108"/>
    </source>
</evidence>
<evidence type="ECO:0000256" key="2">
    <source>
        <dbReference type="SAM" id="MobiDB-lite"/>
    </source>
</evidence>
<evidence type="ECO:0000305" key="3"/>
<proteinExistence type="evidence at transcript level"/>
<gene>
    <name type="primary">HOXB3</name>
    <name type="synonym">CHOX-2.7</name>
</gene>
<name>HXB3_CHICK</name>
<sequence length="399" mass="43504">MQKTTYYESSTLFGGYSYGSTNGFGYEGPQQPFQPGSHVENDFQRSACSLQSLGNTTQHAKSKDLNGSCMRPSLPQEHHPPPTVSPPPNPTTNSTSSNSIPSGSAKVPRVKPTSVQTPSLTKQIFPWMKESRQNSKQKSSSPSTETCSGEKTPPGSSASKRARTAYTSAQLVELEKEFHFNRYLCRPRRVEMANLLNLSERQIKIWFQNRRMKYKKDQKSKGMGSSSGGPSPTGSPPQPMQSSAGFMNALHTMSSNYDAPSPPSLNKPHQNAYAHVTNYQNPIKGALQQKYTNTAPEYDPHVLQGNGVAYGTPSMQGSPVYVGGNYVDSLPTSGPSLYGLNHLPHHQAANMDYSGPPQMPPSQHHGPCEPHPTYTDLWPAQPTHLLGGQNPGGPKLTHL</sequence>
<reference key="1">
    <citation type="journal article" date="1994" name="Gene">
        <title>Chick HoxB3: deduced amino-acid sequence and embryonic gene expression.</title>
        <authorList>
            <person name="Rex M."/>
            <person name="Scotting P.J."/>
        </authorList>
    </citation>
    <scope>NUCLEOTIDE SEQUENCE [GENOMIC DNA]</scope>
    <source>
        <strain>Comet Hubbard hybrid</strain>
    </source>
</reference>
<reference key="2">
    <citation type="journal article" date="1990" name="Nucleic Acids Res.">
        <title>Isolation and analysis of chick homeobox cDNA clones.</title>
        <authorList>
            <person name="Scotting P.J."/>
            <person name="Hewitt M."/>
            <person name="Keynes R.J."/>
        </authorList>
    </citation>
    <scope>NUCLEOTIDE SEQUENCE [MRNA] OF 128-223</scope>
</reference>
<keyword id="KW-0217">Developmental protein</keyword>
<keyword id="KW-0238">DNA-binding</keyword>
<keyword id="KW-0371">Homeobox</keyword>
<keyword id="KW-0539">Nucleus</keyword>
<keyword id="KW-1185">Reference proteome</keyword>
<keyword id="KW-0804">Transcription</keyword>
<keyword id="KW-0805">Transcription regulation</keyword>
<feature type="chain" id="PRO_0000200119" description="Homeobox protein Hox-B3">
    <location>
        <begin position="1"/>
        <end position="399"/>
    </location>
</feature>
<feature type="DNA-binding region" description="Homeobox" evidence="1">
    <location>
        <begin position="159"/>
        <end position="218"/>
    </location>
</feature>
<feature type="region of interest" description="Disordered" evidence="2">
    <location>
        <begin position="18"/>
        <end position="164"/>
    </location>
</feature>
<feature type="region of interest" description="Disordered" evidence="2">
    <location>
        <begin position="214"/>
        <end position="244"/>
    </location>
</feature>
<feature type="region of interest" description="Disordered" evidence="2">
    <location>
        <begin position="352"/>
        <end position="399"/>
    </location>
</feature>
<feature type="short sequence motif" description="Antp-type hexapeptide">
    <location>
        <begin position="124"/>
        <end position="129"/>
    </location>
</feature>
<feature type="compositionally biased region" description="Polar residues" evidence="2">
    <location>
        <begin position="44"/>
        <end position="59"/>
    </location>
</feature>
<feature type="compositionally biased region" description="Pro residues" evidence="2">
    <location>
        <begin position="81"/>
        <end position="90"/>
    </location>
</feature>
<feature type="compositionally biased region" description="Low complexity" evidence="2">
    <location>
        <begin position="91"/>
        <end position="104"/>
    </location>
</feature>
<feature type="compositionally biased region" description="Polar residues" evidence="2">
    <location>
        <begin position="113"/>
        <end position="122"/>
    </location>
</feature>
<feature type="compositionally biased region" description="Polar residues" evidence="2">
    <location>
        <begin position="134"/>
        <end position="164"/>
    </location>
</feature>
<feature type="compositionally biased region" description="Low complexity" evidence="2">
    <location>
        <begin position="221"/>
        <end position="232"/>
    </location>
</feature>
<feature type="sequence conflict" description="In Ref. 2; CAB57800." evidence="3" ref="2">
    <original>Q</original>
    <variation>E</variation>
    <location>
        <position position="218"/>
    </location>
</feature>
<organism>
    <name type="scientific">Gallus gallus</name>
    <name type="common">Chicken</name>
    <dbReference type="NCBI Taxonomy" id="9031"/>
    <lineage>
        <taxon>Eukaryota</taxon>
        <taxon>Metazoa</taxon>
        <taxon>Chordata</taxon>
        <taxon>Craniata</taxon>
        <taxon>Vertebrata</taxon>
        <taxon>Euteleostomi</taxon>
        <taxon>Archelosauria</taxon>
        <taxon>Archosauria</taxon>
        <taxon>Dinosauria</taxon>
        <taxon>Saurischia</taxon>
        <taxon>Theropoda</taxon>
        <taxon>Coelurosauria</taxon>
        <taxon>Aves</taxon>
        <taxon>Neognathae</taxon>
        <taxon>Galloanserae</taxon>
        <taxon>Galliformes</taxon>
        <taxon>Phasianidae</taxon>
        <taxon>Phasianinae</taxon>
        <taxon>Gallus</taxon>
    </lineage>
</organism>
<dbReference type="EMBL" id="X74506">
    <property type="protein sequence ID" value="CAA52613.1"/>
    <property type="molecule type" value="Genomic_DNA"/>
</dbReference>
<dbReference type="EMBL" id="X52749">
    <property type="protein sequence ID" value="CAB57800.1"/>
    <property type="molecule type" value="mRNA"/>
</dbReference>
<dbReference type="PIR" id="S10885">
    <property type="entry name" value="S10885"/>
</dbReference>
<dbReference type="PIR" id="S71480">
    <property type="entry name" value="S71480"/>
</dbReference>
<dbReference type="SMR" id="P23682"/>
<dbReference type="FunCoup" id="P23682">
    <property type="interactions" value="74"/>
</dbReference>
<dbReference type="STRING" id="9031.ENSGALP00000050233"/>
<dbReference type="GlyGen" id="P23682">
    <property type="glycosylation" value="2 sites"/>
</dbReference>
<dbReference type="VEuPathDB" id="HostDB:geneid_395502"/>
<dbReference type="InParanoid" id="P23682"/>
<dbReference type="PhylomeDB" id="P23682"/>
<dbReference type="Proteomes" id="UP000000539">
    <property type="component" value="Unassembled WGS sequence"/>
</dbReference>
<dbReference type="GO" id="GO:0005634">
    <property type="term" value="C:nucleus"/>
    <property type="evidence" value="ECO:0000318"/>
    <property type="project" value="GO_Central"/>
</dbReference>
<dbReference type="GO" id="GO:0000981">
    <property type="term" value="F:DNA-binding transcription factor activity, RNA polymerase II-specific"/>
    <property type="evidence" value="ECO:0000318"/>
    <property type="project" value="GO_Central"/>
</dbReference>
<dbReference type="GO" id="GO:0000978">
    <property type="term" value="F:RNA polymerase II cis-regulatory region sequence-specific DNA binding"/>
    <property type="evidence" value="ECO:0000318"/>
    <property type="project" value="GO_Central"/>
</dbReference>
<dbReference type="GO" id="GO:0009952">
    <property type="term" value="P:anterior/posterior pattern specification"/>
    <property type="evidence" value="ECO:0000318"/>
    <property type="project" value="GO_Central"/>
</dbReference>
<dbReference type="GO" id="GO:0048704">
    <property type="term" value="P:embryonic skeletal system morphogenesis"/>
    <property type="evidence" value="ECO:0000318"/>
    <property type="project" value="GO_Central"/>
</dbReference>
<dbReference type="GO" id="GO:0006357">
    <property type="term" value="P:regulation of transcription by RNA polymerase II"/>
    <property type="evidence" value="ECO:0000318"/>
    <property type="project" value="GO_Central"/>
</dbReference>
<dbReference type="CDD" id="cd00086">
    <property type="entry name" value="homeodomain"/>
    <property type="match status" value="1"/>
</dbReference>
<dbReference type="FunFam" id="1.10.10.60:FF:000094">
    <property type="entry name" value="Homeobox protein Hox-A3"/>
    <property type="match status" value="1"/>
</dbReference>
<dbReference type="Gene3D" id="1.10.10.60">
    <property type="entry name" value="Homeodomain-like"/>
    <property type="match status" value="1"/>
</dbReference>
<dbReference type="InterPro" id="IPR025281">
    <property type="entry name" value="DUF4074"/>
</dbReference>
<dbReference type="InterPro" id="IPR001356">
    <property type="entry name" value="HD"/>
</dbReference>
<dbReference type="InterPro" id="IPR020479">
    <property type="entry name" value="HD_metazoa"/>
</dbReference>
<dbReference type="InterPro" id="IPR001827">
    <property type="entry name" value="Homeobox_Antennapedia_CS"/>
</dbReference>
<dbReference type="InterPro" id="IPR017970">
    <property type="entry name" value="Homeobox_CS"/>
</dbReference>
<dbReference type="InterPro" id="IPR009057">
    <property type="entry name" value="Homeodomain-like_sf"/>
</dbReference>
<dbReference type="PANTHER" id="PTHR45664:SF11">
    <property type="entry name" value="HOMEOBOX PROTEIN HOX-B3"/>
    <property type="match status" value="1"/>
</dbReference>
<dbReference type="PANTHER" id="PTHR45664">
    <property type="entry name" value="PROTEIN ZERKNUELLT 1-RELATED"/>
    <property type="match status" value="1"/>
</dbReference>
<dbReference type="Pfam" id="PF13293">
    <property type="entry name" value="DUF4074"/>
    <property type="match status" value="1"/>
</dbReference>
<dbReference type="Pfam" id="PF00046">
    <property type="entry name" value="Homeodomain"/>
    <property type="match status" value="1"/>
</dbReference>
<dbReference type="PRINTS" id="PR00024">
    <property type="entry name" value="HOMEOBOX"/>
</dbReference>
<dbReference type="SMART" id="SM00389">
    <property type="entry name" value="HOX"/>
    <property type="match status" value="1"/>
</dbReference>
<dbReference type="SUPFAM" id="SSF46689">
    <property type="entry name" value="Homeodomain-like"/>
    <property type="match status" value="1"/>
</dbReference>
<dbReference type="PROSITE" id="PS00032">
    <property type="entry name" value="ANTENNAPEDIA"/>
    <property type="match status" value="1"/>
</dbReference>
<dbReference type="PROSITE" id="PS00027">
    <property type="entry name" value="HOMEOBOX_1"/>
    <property type="match status" value="1"/>
</dbReference>
<dbReference type="PROSITE" id="PS50071">
    <property type="entry name" value="HOMEOBOX_2"/>
    <property type="match status" value="1"/>
</dbReference>